<gene>
    <name evidence="10" type="primary">Hsc70-3</name>
    <name type="synonym">Hsc3</name>
    <name type="ORF">CG4147</name>
</gene>
<feature type="signal peptide" evidence="4">
    <location>
        <begin position="1"/>
        <end position="18"/>
    </location>
</feature>
<feature type="chain" id="PRO_0000013546" description="Endoplasmic reticulum chaperone BiP">
    <location>
        <begin position="19"/>
        <end position="656"/>
    </location>
</feature>
<feature type="region of interest" description="Nucleotide-binding (NBD)" evidence="2">
    <location>
        <begin position="126"/>
        <end position="280"/>
    </location>
</feature>
<feature type="region of interest" description="Substrate-binding (SBD)" evidence="2">
    <location>
        <begin position="420"/>
        <end position="500"/>
    </location>
</feature>
<feature type="region of interest" description="Disordered" evidence="6">
    <location>
        <begin position="634"/>
        <end position="656"/>
    </location>
</feature>
<feature type="short sequence motif" description="Prevents secretion from ER" evidence="5">
    <location>
        <begin position="653"/>
        <end position="656"/>
    </location>
</feature>
<feature type="compositionally biased region" description="Acidic residues" evidence="6">
    <location>
        <begin position="646"/>
        <end position="656"/>
    </location>
</feature>
<feature type="binding site" evidence="2">
    <location>
        <begin position="37"/>
        <end position="40"/>
    </location>
    <ligand>
        <name>ATP</name>
        <dbReference type="ChEBI" id="CHEBI:30616"/>
    </ligand>
</feature>
<feature type="binding site" evidence="2">
    <location>
        <position position="97"/>
    </location>
    <ligand>
        <name>ATP</name>
        <dbReference type="ChEBI" id="CHEBI:30616"/>
    </ligand>
</feature>
<feature type="binding site" evidence="2">
    <location>
        <begin position="227"/>
        <end position="229"/>
    </location>
    <ligand>
        <name>ATP</name>
        <dbReference type="ChEBI" id="CHEBI:30616"/>
    </ligand>
</feature>
<feature type="binding site" evidence="2">
    <location>
        <begin position="293"/>
        <end position="300"/>
    </location>
    <ligand>
        <name>ATP</name>
        <dbReference type="ChEBI" id="CHEBI:30616"/>
    </ligand>
</feature>
<feature type="binding site" evidence="2">
    <location>
        <begin position="364"/>
        <end position="367"/>
    </location>
    <ligand>
        <name>ATP</name>
        <dbReference type="ChEBI" id="CHEBI:30616"/>
    </ligand>
</feature>
<feature type="modified residue" description="O-AMP-threonine" evidence="7 8">
    <location>
        <position position="518"/>
    </location>
</feature>
<feature type="sequence conflict" description="In Ref. 4; AAO45194." evidence="9" ref="4">
    <location>
        <position position="313"/>
    </location>
</feature>
<feature type="sequence conflict" description="In Ref. 1; AAA28626." evidence="9" ref="1">
    <original>G</original>
    <variation>A</variation>
    <location>
        <position position="507"/>
    </location>
</feature>
<feature type="sequence conflict" description="In Ref. 1; AAA28626." evidence="9" ref="1">
    <original>Q</original>
    <variation>T</variation>
    <location>
        <position position="510"/>
    </location>
</feature>
<feature type="sequence conflict" description="In Ref. 1; AAA28626." evidence="9" ref="1">
    <original>N</original>
    <variation>T</variation>
    <location>
        <position position="592"/>
    </location>
</feature>
<accession>P29844</accession>
<accession>A4V4C4</accession>
<accession>Q86NM3</accession>
<accession>Q9VYU2</accession>
<accession>Q9VYU3</accession>
<proteinExistence type="evidence at protein level"/>
<organism>
    <name type="scientific">Drosophila melanogaster</name>
    <name type="common">Fruit fly</name>
    <dbReference type="NCBI Taxonomy" id="7227"/>
    <lineage>
        <taxon>Eukaryota</taxon>
        <taxon>Metazoa</taxon>
        <taxon>Ecdysozoa</taxon>
        <taxon>Arthropoda</taxon>
        <taxon>Hexapoda</taxon>
        <taxon>Insecta</taxon>
        <taxon>Pterygota</taxon>
        <taxon>Neoptera</taxon>
        <taxon>Endopterygota</taxon>
        <taxon>Diptera</taxon>
        <taxon>Brachycera</taxon>
        <taxon>Muscomorpha</taxon>
        <taxon>Ephydroidea</taxon>
        <taxon>Drosophilidae</taxon>
        <taxon>Drosophila</taxon>
        <taxon>Sophophora</taxon>
    </lineage>
</organism>
<keyword id="KW-0067">ATP-binding</keyword>
<keyword id="KW-0143">Chaperone</keyword>
<keyword id="KW-0256">Endoplasmic reticulum</keyword>
<keyword id="KW-0378">Hydrolase</keyword>
<keyword id="KW-0547">Nucleotide-binding</keyword>
<keyword id="KW-0597">Phosphoprotein</keyword>
<keyword id="KW-1185">Reference proteome</keyword>
<keyword id="KW-0732">Signal</keyword>
<reference key="1">
    <citation type="journal article" date="1993" name="Gene">
        <title>Genomic structure and sequence analysis of Drosophila melanogaster HSC70 genes.</title>
        <authorList>
            <person name="Rubin D.M."/>
            <person name="Mehta A."/>
            <person name="Zhu J."/>
            <person name="Shoham S."/>
            <person name="Chen X.J."/>
            <person name="Wells Q."/>
            <person name="Palter K.B."/>
        </authorList>
    </citation>
    <scope>NUCLEOTIDE SEQUENCE [MRNA]</scope>
    <source>
        <tissue>Larva</tissue>
    </source>
</reference>
<reference key="2">
    <citation type="journal article" date="2000" name="Science">
        <title>The genome sequence of Drosophila melanogaster.</title>
        <authorList>
            <person name="Adams M.D."/>
            <person name="Celniker S.E."/>
            <person name="Holt R.A."/>
            <person name="Evans C.A."/>
            <person name="Gocayne J.D."/>
            <person name="Amanatides P.G."/>
            <person name="Scherer S.E."/>
            <person name="Li P.W."/>
            <person name="Hoskins R.A."/>
            <person name="Galle R.F."/>
            <person name="George R.A."/>
            <person name="Lewis S.E."/>
            <person name="Richards S."/>
            <person name="Ashburner M."/>
            <person name="Henderson S.N."/>
            <person name="Sutton G.G."/>
            <person name="Wortman J.R."/>
            <person name="Yandell M.D."/>
            <person name="Zhang Q."/>
            <person name="Chen L.X."/>
            <person name="Brandon R.C."/>
            <person name="Rogers Y.-H.C."/>
            <person name="Blazej R.G."/>
            <person name="Champe M."/>
            <person name="Pfeiffer B.D."/>
            <person name="Wan K.H."/>
            <person name="Doyle C."/>
            <person name="Baxter E.G."/>
            <person name="Helt G."/>
            <person name="Nelson C.R."/>
            <person name="Miklos G.L.G."/>
            <person name="Abril J.F."/>
            <person name="Agbayani A."/>
            <person name="An H.-J."/>
            <person name="Andrews-Pfannkoch C."/>
            <person name="Baldwin D."/>
            <person name="Ballew R.M."/>
            <person name="Basu A."/>
            <person name="Baxendale J."/>
            <person name="Bayraktaroglu L."/>
            <person name="Beasley E.M."/>
            <person name="Beeson K.Y."/>
            <person name="Benos P.V."/>
            <person name="Berman B.P."/>
            <person name="Bhandari D."/>
            <person name="Bolshakov S."/>
            <person name="Borkova D."/>
            <person name="Botchan M.R."/>
            <person name="Bouck J."/>
            <person name="Brokstein P."/>
            <person name="Brottier P."/>
            <person name="Burtis K.C."/>
            <person name="Busam D.A."/>
            <person name="Butler H."/>
            <person name="Cadieu E."/>
            <person name="Center A."/>
            <person name="Chandra I."/>
            <person name="Cherry J.M."/>
            <person name="Cawley S."/>
            <person name="Dahlke C."/>
            <person name="Davenport L.B."/>
            <person name="Davies P."/>
            <person name="de Pablos B."/>
            <person name="Delcher A."/>
            <person name="Deng Z."/>
            <person name="Mays A.D."/>
            <person name="Dew I."/>
            <person name="Dietz S.M."/>
            <person name="Dodson K."/>
            <person name="Doup L.E."/>
            <person name="Downes M."/>
            <person name="Dugan-Rocha S."/>
            <person name="Dunkov B.C."/>
            <person name="Dunn P."/>
            <person name="Durbin K.J."/>
            <person name="Evangelista C.C."/>
            <person name="Ferraz C."/>
            <person name="Ferriera S."/>
            <person name="Fleischmann W."/>
            <person name="Fosler C."/>
            <person name="Gabrielian A.E."/>
            <person name="Garg N.S."/>
            <person name="Gelbart W.M."/>
            <person name="Glasser K."/>
            <person name="Glodek A."/>
            <person name="Gong F."/>
            <person name="Gorrell J.H."/>
            <person name="Gu Z."/>
            <person name="Guan P."/>
            <person name="Harris M."/>
            <person name="Harris N.L."/>
            <person name="Harvey D.A."/>
            <person name="Heiman T.J."/>
            <person name="Hernandez J.R."/>
            <person name="Houck J."/>
            <person name="Hostin D."/>
            <person name="Houston K.A."/>
            <person name="Howland T.J."/>
            <person name="Wei M.-H."/>
            <person name="Ibegwam C."/>
            <person name="Jalali M."/>
            <person name="Kalush F."/>
            <person name="Karpen G.H."/>
            <person name="Ke Z."/>
            <person name="Kennison J.A."/>
            <person name="Ketchum K.A."/>
            <person name="Kimmel B.E."/>
            <person name="Kodira C.D."/>
            <person name="Kraft C.L."/>
            <person name="Kravitz S."/>
            <person name="Kulp D."/>
            <person name="Lai Z."/>
            <person name="Lasko P."/>
            <person name="Lei Y."/>
            <person name="Levitsky A.A."/>
            <person name="Li J.H."/>
            <person name="Li Z."/>
            <person name="Liang Y."/>
            <person name="Lin X."/>
            <person name="Liu X."/>
            <person name="Mattei B."/>
            <person name="McIntosh T.C."/>
            <person name="McLeod M.P."/>
            <person name="McPherson D."/>
            <person name="Merkulov G."/>
            <person name="Milshina N.V."/>
            <person name="Mobarry C."/>
            <person name="Morris J."/>
            <person name="Moshrefi A."/>
            <person name="Mount S.M."/>
            <person name="Moy M."/>
            <person name="Murphy B."/>
            <person name="Murphy L."/>
            <person name="Muzny D.M."/>
            <person name="Nelson D.L."/>
            <person name="Nelson D.R."/>
            <person name="Nelson K.A."/>
            <person name="Nixon K."/>
            <person name="Nusskern D.R."/>
            <person name="Pacleb J.M."/>
            <person name="Palazzolo M."/>
            <person name="Pittman G.S."/>
            <person name="Pan S."/>
            <person name="Pollard J."/>
            <person name="Puri V."/>
            <person name="Reese M.G."/>
            <person name="Reinert K."/>
            <person name="Remington K."/>
            <person name="Saunders R.D.C."/>
            <person name="Scheeler F."/>
            <person name="Shen H."/>
            <person name="Shue B.C."/>
            <person name="Siden-Kiamos I."/>
            <person name="Simpson M."/>
            <person name="Skupski M.P."/>
            <person name="Smith T.J."/>
            <person name="Spier E."/>
            <person name="Spradling A.C."/>
            <person name="Stapleton M."/>
            <person name="Strong R."/>
            <person name="Sun E."/>
            <person name="Svirskas R."/>
            <person name="Tector C."/>
            <person name="Turner R."/>
            <person name="Venter E."/>
            <person name="Wang A.H."/>
            <person name="Wang X."/>
            <person name="Wang Z.-Y."/>
            <person name="Wassarman D.A."/>
            <person name="Weinstock G.M."/>
            <person name="Weissenbach J."/>
            <person name="Williams S.M."/>
            <person name="Woodage T."/>
            <person name="Worley K.C."/>
            <person name="Wu D."/>
            <person name="Yang S."/>
            <person name="Yao Q.A."/>
            <person name="Ye J."/>
            <person name="Yeh R.-F."/>
            <person name="Zaveri J.S."/>
            <person name="Zhan M."/>
            <person name="Zhang G."/>
            <person name="Zhao Q."/>
            <person name="Zheng L."/>
            <person name="Zheng X.H."/>
            <person name="Zhong F.N."/>
            <person name="Zhong W."/>
            <person name="Zhou X."/>
            <person name="Zhu S.C."/>
            <person name="Zhu X."/>
            <person name="Smith H.O."/>
            <person name="Gibbs R.A."/>
            <person name="Myers E.W."/>
            <person name="Rubin G.M."/>
            <person name="Venter J.C."/>
        </authorList>
    </citation>
    <scope>NUCLEOTIDE SEQUENCE [LARGE SCALE GENOMIC DNA]</scope>
    <source>
        <strain>Berkeley</strain>
    </source>
</reference>
<reference key="3">
    <citation type="journal article" date="2002" name="Genome Biol.">
        <title>Annotation of the Drosophila melanogaster euchromatic genome: a systematic review.</title>
        <authorList>
            <person name="Misra S."/>
            <person name="Crosby M.A."/>
            <person name="Mungall C.J."/>
            <person name="Matthews B.B."/>
            <person name="Campbell K.S."/>
            <person name="Hradecky P."/>
            <person name="Huang Y."/>
            <person name="Kaminker J.S."/>
            <person name="Millburn G.H."/>
            <person name="Prochnik S.E."/>
            <person name="Smith C.D."/>
            <person name="Tupy J.L."/>
            <person name="Whitfield E.J."/>
            <person name="Bayraktaroglu L."/>
            <person name="Berman B.P."/>
            <person name="Bettencourt B.R."/>
            <person name="Celniker S.E."/>
            <person name="de Grey A.D.N.J."/>
            <person name="Drysdale R.A."/>
            <person name="Harris N.L."/>
            <person name="Richter J."/>
            <person name="Russo S."/>
            <person name="Schroeder A.J."/>
            <person name="Shu S.Q."/>
            <person name="Stapleton M."/>
            <person name="Yamada C."/>
            <person name="Ashburner M."/>
            <person name="Gelbart W.M."/>
            <person name="Rubin G.M."/>
            <person name="Lewis S.E."/>
        </authorList>
    </citation>
    <scope>GENOME REANNOTATION</scope>
    <source>
        <strain>Berkeley</strain>
    </source>
</reference>
<reference key="4">
    <citation type="submission" date="2003-02" db="EMBL/GenBank/DDBJ databases">
        <authorList>
            <person name="Stapleton M."/>
            <person name="Brokstein P."/>
            <person name="Hong L."/>
            <person name="Agbayani A."/>
            <person name="Carlson J.W."/>
            <person name="Champe M."/>
            <person name="Chavez C."/>
            <person name="Dorsett V."/>
            <person name="Dresnek D."/>
            <person name="Farfan D."/>
            <person name="Frise E."/>
            <person name="George R.A."/>
            <person name="Gonzalez M."/>
            <person name="Guarin H."/>
            <person name="Kronmiller B."/>
            <person name="Li P.W."/>
            <person name="Liao G."/>
            <person name="Miranda A."/>
            <person name="Mungall C.J."/>
            <person name="Nunoo J."/>
            <person name="Pacleb J.M."/>
            <person name="Paragas V."/>
            <person name="Park S."/>
            <person name="Patel S."/>
            <person name="Phouanenavong S."/>
            <person name="Wan K.H."/>
            <person name="Yu C."/>
            <person name="Lewis S.E."/>
            <person name="Rubin G.M."/>
            <person name="Celniker S.E."/>
        </authorList>
    </citation>
    <scope>NUCLEOTIDE SEQUENCE [LARGE SCALE MRNA]</scope>
    <source>
        <strain>Berkeley</strain>
        <tissue>Head</tissue>
    </source>
</reference>
<reference key="5">
    <citation type="journal article" date="2014" name="J. Biol. Chem.">
        <title>Unfolded protein response-regulated Drosophila Fic (dFic) protein reversibly AMPylates BiP chaperone during endoplasmic reticulum homeostasis.</title>
        <authorList>
            <person name="Ham H."/>
            <person name="Woolery A.R."/>
            <person name="Tracy C."/>
            <person name="Stenesen D."/>
            <person name="Kraemer H."/>
            <person name="Orth K."/>
        </authorList>
    </citation>
    <scope>AMPYLATION</scope>
</reference>
<reference key="6">
    <citation type="journal article" date="2017" name="J. Biol. Chem.">
        <title>Fic-mediated deAMPylation is not dependent on homodimerization and rescues toxic AMPylation in flies.</title>
        <authorList>
            <person name="Casey A.K."/>
            <person name="Moehlman A.T."/>
            <person name="Zhang J."/>
            <person name="Servage K.A."/>
            <person name="Kraemer H."/>
            <person name="Orth K."/>
        </authorList>
    </citation>
    <scope>AMPYLATION AT THR-518</scope>
    <scope>DEAMPYLATION AT THR-518</scope>
</reference>
<dbReference type="EC" id="3.6.4.10"/>
<dbReference type="EMBL" id="L01498">
    <property type="protein sequence ID" value="AAA28626.1"/>
    <property type="molecule type" value="mRNA"/>
</dbReference>
<dbReference type="EMBL" id="AE014298">
    <property type="protein sequence ID" value="AAF48095.1"/>
    <property type="molecule type" value="Genomic_DNA"/>
</dbReference>
<dbReference type="EMBL" id="AE014298">
    <property type="protein sequence ID" value="AAN09299.1"/>
    <property type="molecule type" value="Genomic_DNA"/>
</dbReference>
<dbReference type="EMBL" id="AE014298">
    <property type="protein sequence ID" value="AAN09300.1"/>
    <property type="molecule type" value="Genomic_DNA"/>
</dbReference>
<dbReference type="EMBL" id="AE014298">
    <property type="protein sequence ID" value="AAN09301.1"/>
    <property type="molecule type" value="Genomic_DNA"/>
</dbReference>
<dbReference type="EMBL" id="BT004838">
    <property type="protein sequence ID" value="AAO45194.1"/>
    <property type="molecule type" value="mRNA"/>
</dbReference>
<dbReference type="PIR" id="JN0666">
    <property type="entry name" value="JN0666"/>
</dbReference>
<dbReference type="RefSeq" id="NP_001285139.1">
    <property type="nucleotide sequence ID" value="NM_001298210.1"/>
</dbReference>
<dbReference type="RefSeq" id="NP_511132.2">
    <property type="nucleotide sequence ID" value="NM_078577.3"/>
</dbReference>
<dbReference type="RefSeq" id="NP_727563.1">
    <property type="nucleotide sequence ID" value="NM_167306.2"/>
</dbReference>
<dbReference type="RefSeq" id="NP_727564.1">
    <property type="nucleotide sequence ID" value="NM_167307.2"/>
</dbReference>
<dbReference type="RefSeq" id="NP_727565.1">
    <property type="nucleotide sequence ID" value="NM_167308.2"/>
</dbReference>
<dbReference type="SMR" id="P29844"/>
<dbReference type="BioGRID" id="58539">
    <property type="interactions" value="56"/>
</dbReference>
<dbReference type="DIP" id="DIP-19696N"/>
<dbReference type="FunCoup" id="P29844">
    <property type="interactions" value="1625"/>
</dbReference>
<dbReference type="IntAct" id="P29844">
    <property type="interactions" value="8"/>
</dbReference>
<dbReference type="MINT" id="P29844"/>
<dbReference type="STRING" id="7227.FBpp0073447"/>
<dbReference type="GlyGen" id="P29844">
    <property type="glycosylation" value="1 site, 1 O-linked glycan (1 site)"/>
</dbReference>
<dbReference type="PaxDb" id="7227-FBpp0073445"/>
<dbReference type="DNASU" id="32133"/>
<dbReference type="EnsemblMetazoa" id="FBtr0073608">
    <property type="protein sequence ID" value="FBpp0073445"/>
    <property type="gene ID" value="FBgn0001218"/>
</dbReference>
<dbReference type="EnsemblMetazoa" id="FBtr0073609">
    <property type="protein sequence ID" value="FBpp0073446"/>
    <property type="gene ID" value="FBgn0001218"/>
</dbReference>
<dbReference type="EnsemblMetazoa" id="FBtr0073610">
    <property type="protein sequence ID" value="FBpp0073447"/>
    <property type="gene ID" value="FBgn0001218"/>
</dbReference>
<dbReference type="EnsemblMetazoa" id="FBtr0073611">
    <property type="protein sequence ID" value="FBpp0073448"/>
    <property type="gene ID" value="FBgn0001218"/>
</dbReference>
<dbReference type="EnsemblMetazoa" id="FBtr0345166">
    <property type="protein sequence ID" value="FBpp0311376"/>
    <property type="gene ID" value="FBgn0001218"/>
</dbReference>
<dbReference type="GeneID" id="32133"/>
<dbReference type="KEGG" id="dme:Dmel_CG4147"/>
<dbReference type="UCSC" id="CG4147-RB">
    <property type="organism name" value="d. melanogaster"/>
</dbReference>
<dbReference type="AGR" id="FB:FBgn0001218"/>
<dbReference type="CTD" id="32133"/>
<dbReference type="FlyBase" id="FBgn0001218">
    <property type="gene designation" value="Hsc70-3"/>
</dbReference>
<dbReference type="VEuPathDB" id="VectorBase:FBgn0001218"/>
<dbReference type="eggNOG" id="KOG0100">
    <property type="taxonomic scope" value="Eukaryota"/>
</dbReference>
<dbReference type="GeneTree" id="ENSGT00940000154787"/>
<dbReference type="HOGENOM" id="CLU_005965_3_0_1"/>
<dbReference type="InParanoid" id="P29844"/>
<dbReference type="OMA" id="VQRDIKH"/>
<dbReference type="OrthoDB" id="2401965at2759"/>
<dbReference type="PhylomeDB" id="P29844"/>
<dbReference type="SignaLink" id="P29844"/>
<dbReference type="BioGRID-ORCS" id="32133">
    <property type="hits" value="2 hits in 3 CRISPR screens"/>
</dbReference>
<dbReference type="ChiTaRS" id="Hsc70-3">
    <property type="organism name" value="fly"/>
</dbReference>
<dbReference type="GenomeRNAi" id="32133"/>
<dbReference type="PRO" id="PR:P29844"/>
<dbReference type="Proteomes" id="UP000000803">
    <property type="component" value="Chromosome X"/>
</dbReference>
<dbReference type="Bgee" id="FBgn0001218">
    <property type="expression patterns" value="Expressed in midgut large flat cell (Drosophila) in digestive tract and 275 other cell types or tissues"/>
</dbReference>
<dbReference type="ExpressionAtlas" id="P29844">
    <property type="expression patterns" value="baseline and differential"/>
</dbReference>
<dbReference type="GO" id="GO:0005737">
    <property type="term" value="C:cytoplasm"/>
    <property type="evidence" value="ECO:0000318"/>
    <property type="project" value="GO_Central"/>
</dbReference>
<dbReference type="GO" id="GO:0012505">
    <property type="term" value="C:endomembrane system"/>
    <property type="evidence" value="ECO:0007005"/>
    <property type="project" value="FlyBase"/>
</dbReference>
<dbReference type="GO" id="GO:0005783">
    <property type="term" value="C:endoplasmic reticulum"/>
    <property type="evidence" value="ECO:0000314"/>
    <property type="project" value="FlyBase"/>
</dbReference>
<dbReference type="GO" id="GO:0034663">
    <property type="term" value="C:endoplasmic reticulum chaperone complex"/>
    <property type="evidence" value="ECO:0000353"/>
    <property type="project" value="FlyBase"/>
</dbReference>
<dbReference type="GO" id="GO:0005788">
    <property type="term" value="C:endoplasmic reticulum lumen"/>
    <property type="evidence" value="ECO:0000318"/>
    <property type="project" value="GO_Central"/>
</dbReference>
<dbReference type="GO" id="GO:0005615">
    <property type="term" value="C:extracellular space"/>
    <property type="evidence" value="ECO:0000314"/>
    <property type="project" value="FlyBase"/>
</dbReference>
<dbReference type="GO" id="GO:0016020">
    <property type="term" value="C:membrane"/>
    <property type="evidence" value="ECO:0000318"/>
    <property type="project" value="GO_Central"/>
</dbReference>
<dbReference type="GO" id="GO:0005634">
    <property type="term" value="C:nucleus"/>
    <property type="evidence" value="ECO:0000318"/>
    <property type="project" value="GO_Central"/>
</dbReference>
<dbReference type="GO" id="GO:0005524">
    <property type="term" value="F:ATP binding"/>
    <property type="evidence" value="ECO:0007669"/>
    <property type="project" value="UniProtKB-KW"/>
</dbReference>
<dbReference type="GO" id="GO:0016887">
    <property type="term" value="F:ATP hydrolysis activity"/>
    <property type="evidence" value="ECO:0000314"/>
    <property type="project" value="FlyBase"/>
</dbReference>
<dbReference type="GO" id="GO:0140662">
    <property type="term" value="F:ATP-dependent protein folding chaperone"/>
    <property type="evidence" value="ECO:0007669"/>
    <property type="project" value="InterPro"/>
</dbReference>
<dbReference type="GO" id="GO:0031072">
    <property type="term" value="F:heat shock protein binding"/>
    <property type="evidence" value="ECO:0000318"/>
    <property type="project" value="GO_Central"/>
</dbReference>
<dbReference type="GO" id="GO:0044183">
    <property type="term" value="F:protein folding chaperone"/>
    <property type="evidence" value="ECO:0000318"/>
    <property type="project" value="GO_Central"/>
</dbReference>
<dbReference type="GO" id="GO:0015450">
    <property type="term" value="F:protein-transporting ATPase activity"/>
    <property type="evidence" value="ECO:0000250"/>
    <property type="project" value="FlyBase"/>
</dbReference>
<dbReference type="GO" id="GO:0051085">
    <property type="term" value="P:chaperone cofactor-dependent protein refolding"/>
    <property type="evidence" value="ECO:0000318"/>
    <property type="project" value="GO_Central"/>
</dbReference>
<dbReference type="GO" id="GO:0030968">
    <property type="term" value="P:endoplasmic reticulum unfolded protein response"/>
    <property type="evidence" value="ECO:0000318"/>
    <property type="project" value="GO_Central"/>
</dbReference>
<dbReference type="GO" id="GO:0036503">
    <property type="term" value="P:ERAD pathway"/>
    <property type="evidence" value="ECO:0000318"/>
    <property type="project" value="GO_Central"/>
</dbReference>
<dbReference type="GO" id="GO:0036335">
    <property type="term" value="P:intestinal stem cell homeostasis"/>
    <property type="evidence" value="ECO:0000315"/>
    <property type="project" value="FlyBase"/>
</dbReference>
<dbReference type="GO" id="GO:0046621">
    <property type="term" value="P:negative regulation of organ growth"/>
    <property type="evidence" value="ECO:0000315"/>
    <property type="project" value="FlyBase"/>
</dbReference>
<dbReference type="GO" id="GO:0035332">
    <property type="term" value="P:positive regulation of hippo signaling"/>
    <property type="evidence" value="ECO:0000315"/>
    <property type="project" value="FlyBase"/>
</dbReference>
<dbReference type="GO" id="GO:0042026">
    <property type="term" value="P:protein refolding"/>
    <property type="evidence" value="ECO:0000318"/>
    <property type="project" value="GO_Central"/>
</dbReference>
<dbReference type="GO" id="GO:0035194">
    <property type="term" value="P:regulatory ncRNA-mediated post-transcriptional gene silencing"/>
    <property type="evidence" value="ECO:0000315"/>
    <property type="project" value="FlyBase"/>
</dbReference>
<dbReference type="GO" id="GO:0034976">
    <property type="term" value="P:response to endoplasmic reticulum stress"/>
    <property type="evidence" value="ECO:0000315"/>
    <property type="project" value="FlyBase"/>
</dbReference>
<dbReference type="GO" id="GO:0030431">
    <property type="term" value="P:sleep"/>
    <property type="evidence" value="ECO:0000304"/>
    <property type="project" value="FlyBase"/>
</dbReference>
<dbReference type="CDD" id="cd10241">
    <property type="entry name" value="ASKHA_NBD_HSP70_BiP"/>
    <property type="match status" value="1"/>
</dbReference>
<dbReference type="FunFam" id="2.60.34.10:FF:000014">
    <property type="entry name" value="Chaperone protein DnaK HSP70"/>
    <property type="match status" value="1"/>
</dbReference>
<dbReference type="FunFam" id="3.30.420.40:FF:000720">
    <property type="entry name" value="Endoplasmic reticulum chaperone BiP"/>
    <property type="match status" value="1"/>
</dbReference>
<dbReference type="FunFam" id="3.90.640.10:FF:000153">
    <property type="entry name" value="Endoplasmic reticulum chaperone BiP"/>
    <property type="match status" value="1"/>
</dbReference>
<dbReference type="FunFam" id="1.20.1270.10:FF:000029">
    <property type="entry name" value="Heat shock 70 kDa protein cognate"/>
    <property type="match status" value="1"/>
</dbReference>
<dbReference type="FunFam" id="3.30.30.30:FF:000001">
    <property type="entry name" value="heat shock 70 kDa protein-like"/>
    <property type="match status" value="1"/>
</dbReference>
<dbReference type="Gene3D" id="1.20.1270.10">
    <property type="match status" value="1"/>
</dbReference>
<dbReference type="Gene3D" id="3.30.420.40">
    <property type="match status" value="2"/>
</dbReference>
<dbReference type="Gene3D" id="3.90.640.10">
    <property type="entry name" value="Actin, Chain A, domain 4"/>
    <property type="match status" value="1"/>
</dbReference>
<dbReference type="Gene3D" id="2.60.34.10">
    <property type="entry name" value="Substrate Binding Domain Of DNAk, Chain A, domain 1"/>
    <property type="match status" value="1"/>
</dbReference>
<dbReference type="InterPro" id="IPR043129">
    <property type="entry name" value="ATPase_NBD"/>
</dbReference>
<dbReference type="InterPro" id="IPR042050">
    <property type="entry name" value="BIP_NBD"/>
</dbReference>
<dbReference type="InterPro" id="IPR018181">
    <property type="entry name" value="Heat_shock_70_CS"/>
</dbReference>
<dbReference type="InterPro" id="IPR029048">
    <property type="entry name" value="HSP70_C_sf"/>
</dbReference>
<dbReference type="InterPro" id="IPR029047">
    <property type="entry name" value="HSP70_peptide-bd_sf"/>
</dbReference>
<dbReference type="InterPro" id="IPR013126">
    <property type="entry name" value="Hsp_70_fam"/>
</dbReference>
<dbReference type="NCBIfam" id="NF001413">
    <property type="entry name" value="PRK00290.1"/>
    <property type="match status" value="1"/>
</dbReference>
<dbReference type="PANTHER" id="PTHR19375">
    <property type="entry name" value="HEAT SHOCK PROTEIN 70KDA"/>
    <property type="match status" value="1"/>
</dbReference>
<dbReference type="Pfam" id="PF00012">
    <property type="entry name" value="HSP70"/>
    <property type="match status" value="1"/>
</dbReference>
<dbReference type="PRINTS" id="PR00301">
    <property type="entry name" value="HEATSHOCK70"/>
</dbReference>
<dbReference type="SUPFAM" id="SSF53067">
    <property type="entry name" value="Actin-like ATPase domain"/>
    <property type="match status" value="2"/>
</dbReference>
<dbReference type="SUPFAM" id="SSF100934">
    <property type="entry name" value="Heat shock protein 70kD (HSP70), C-terminal subdomain"/>
    <property type="match status" value="1"/>
</dbReference>
<dbReference type="SUPFAM" id="SSF100920">
    <property type="entry name" value="Heat shock protein 70kD (HSP70), peptide-binding domain"/>
    <property type="match status" value="1"/>
</dbReference>
<dbReference type="PROSITE" id="PS00014">
    <property type="entry name" value="ER_TARGET"/>
    <property type="match status" value="1"/>
</dbReference>
<dbReference type="PROSITE" id="PS00297">
    <property type="entry name" value="HSP70_1"/>
    <property type="match status" value="1"/>
</dbReference>
<dbReference type="PROSITE" id="PS00329">
    <property type="entry name" value="HSP70_2"/>
    <property type="match status" value="1"/>
</dbReference>
<dbReference type="PROSITE" id="PS01036">
    <property type="entry name" value="HSP70_3"/>
    <property type="match status" value="1"/>
</dbReference>
<protein>
    <recommendedName>
        <fullName evidence="9">Endoplasmic reticulum chaperone BiP</fullName>
        <ecNumber>3.6.4.10</ecNumber>
    </recommendedName>
    <alternativeName>
        <fullName evidence="2">78 kDa glucose-regulated protein homolog</fullName>
        <shortName evidence="2">GRP-78 homolog</shortName>
    </alternativeName>
    <alternativeName>
        <fullName evidence="2">Binding-immunoglobulin protein homolog</fullName>
        <shortName evidence="2">BiP</shortName>
    </alternativeName>
    <alternativeName>
        <fullName evidence="9">Heat shock 70 kDa protein cognate 3</fullName>
    </alternativeName>
    <alternativeName>
        <fullName>Heat shock protein cognate 72</fullName>
    </alternativeName>
</protein>
<name>BIP_DROME</name>
<sequence>MKLCILLAVVAFVGLSLGEEKKEKDKELGTVIGIDLGTTYSCVGVYKNGRVEIIANDQGNRITPSYVAFTADGERLIGDAAKNQLTTNPENTVFDAKRLIGREWSDTNVQHDIKFFPFKVVEKNSKPHISVDTSQGAKVFAPEEISAMVLGKMKETAEAYLGKKVTHAVVTVPAYFNDAQRQATKDAGVIAGLQVMRIINEPTAAAIAYGLDKKEGEKNVLVFDLGGGTFDVSLLTIDNGVFEVVATNGDTHLGGEDFDQRVMDHFIKLYKKKKGKDIRKDNRAVQKLRREVEKAKRALSGSHQVRIEIESFFEGDDFSETLTRAKFEELNLDLFRSTLKPVQKVLEDADMNKKDVHEIVLVGGSTRIPKVQQLVKDFFGGKEPSRGINPDEAVAYGAAVQAGVLSGEQDTDAIVLLDVNPLTMGIETVGGVMTKLIPRNTVIPTKKSQVFSTASDNQHTVTIQVYEGERPMTKDNHLLGKFDLTGIPPAPRGIPQIEVSFEIDANGILQVSAEDKGTGNKEKIVITNDQNRLTPEDIDRMIRDAEKFADEDKKLKERVESRNELESYAYSLKNQIGDKDKLGAKLSDDEKNKLESAIDESIKWLEQNPDADPEEYKKQKKDLEAIVQPVIAKLYQGAGGAPPPEGGDDADLKDEL</sequence>
<evidence type="ECO:0000250" key="1">
    <source>
        <dbReference type="UniProtKB" id="G3I8R9"/>
    </source>
</evidence>
<evidence type="ECO:0000250" key="2">
    <source>
        <dbReference type="UniProtKB" id="P11021"/>
    </source>
</evidence>
<evidence type="ECO:0000250" key="3">
    <source>
        <dbReference type="UniProtKB" id="P20029"/>
    </source>
</evidence>
<evidence type="ECO:0000255" key="4"/>
<evidence type="ECO:0000255" key="5">
    <source>
        <dbReference type="PROSITE-ProRule" id="PRU10138"/>
    </source>
</evidence>
<evidence type="ECO:0000256" key="6">
    <source>
        <dbReference type="SAM" id="MobiDB-lite"/>
    </source>
</evidence>
<evidence type="ECO:0000269" key="7">
    <source>
    </source>
</evidence>
<evidence type="ECO:0000269" key="8">
    <source>
    </source>
</evidence>
<evidence type="ECO:0000305" key="9"/>
<evidence type="ECO:0000312" key="10">
    <source>
        <dbReference type="FlyBase" id="FBgn0001218"/>
    </source>
</evidence>
<comment type="function">
    <text evidence="1 2 3">Endoplasmic reticulum chaperone that plays a key role in protein folding and quality control in the endoplasmic reticulum lumen. Involved in the correct folding of proteins and degradation of misfolded proteins (By similarity). Acts as a key repressor of the unfolded protein response (UPR) (By similarity).</text>
</comment>
<comment type="catalytic activity">
    <reaction evidence="2">
        <text>ATP + H2O = ADP + phosphate + H(+)</text>
        <dbReference type="Rhea" id="RHEA:13065"/>
        <dbReference type="ChEBI" id="CHEBI:15377"/>
        <dbReference type="ChEBI" id="CHEBI:15378"/>
        <dbReference type="ChEBI" id="CHEBI:30616"/>
        <dbReference type="ChEBI" id="CHEBI:43474"/>
        <dbReference type="ChEBI" id="CHEBI:456216"/>
        <dbReference type="EC" id="3.6.4.10"/>
    </reaction>
</comment>
<comment type="activity regulation">
    <text evidence="2">The chaperone activity is regulated by ATP-induced allosteric coupling of the nucleotide-binding (NBD) and substrate-binding (SBD) domains. In the ADP-bound and nucleotide-free (apo) states, the two domains have little interaction. In contrast, in the ATP-bound state the two domains are tightly coupled, which results in drastically accelerated kinetics in both binding and release of polypeptide substrates. J domain-containing co-chaperones stimulate the ATPase activity and are required for efficient substrate recognition by HSPA5/BiP.</text>
</comment>
<comment type="subcellular location">
    <subcellularLocation>
        <location evidence="2">Endoplasmic reticulum lumen</location>
    </subcellularLocation>
</comment>
<comment type="PTM">
    <text evidence="7 8">AMPylation at Thr-518 by Fic inactivates the chaperome activity (PubMed:25395623, PubMed:29089387). In response to endoplasmic reticulum stress, de-AMPylation by the same protein, Fic, restores the chaperone activity (PubMed:29089387).</text>
</comment>
<comment type="similarity">
    <text evidence="9">Belongs to the heat shock protein 70 family.</text>
</comment>
<comment type="caution">
    <text evidence="7 8">Was initially thought to be AMPylated at 'Thr-366' by Fic (PubMed:25395623). However, it was later shown to be AMPylated at 'Thr-518'.</text>
</comment>